<proteinExistence type="inferred from homology"/>
<dbReference type="EMBL" id="FC835414">
    <property type="status" value="NOT_ANNOTATED_CDS"/>
    <property type="molecule type" value="mRNA"/>
</dbReference>
<dbReference type="SMR" id="P0DL60"/>
<dbReference type="GO" id="GO:0005576">
    <property type="term" value="C:extracellular region"/>
    <property type="evidence" value="ECO:0007669"/>
    <property type="project" value="UniProtKB-SubCell"/>
</dbReference>
<dbReference type="GO" id="GO:0042151">
    <property type="term" value="C:nematocyst"/>
    <property type="evidence" value="ECO:0007669"/>
    <property type="project" value="UniProtKB-SubCell"/>
</dbReference>
<dbReference type="GO" id="GO:0090729">
    <property type="term" value="F:toxin activity"/>
    <property type="evidence" value="ECO:0007669"/>
    <property type="project" value="UniProtKB-KW"/>
</dbReference>
<feature type="signal peptide" evidence="3">
    <location>
        <begin position="1"/>
        <end position="19"/>
    </location>
</feature>
<feature type="propeptide" id="PRO_0000434291" evidence="5">
    <location>
        <begin position="20"/>
        <end position="22"/>
    </location>
</feature>
<feature type="chain" id="PRO_0000434292" description="Small cysteine-rich protein" evidence="5">
    <location>
        <begin position="25"/>
        <end position="69"/>
    </location>
</feature>
<reference key="1">
    <citation type="submission" date="2007-12" db="EMBL/GenBank/DDBJ databases">
        <authorList>
            <person name="Richardson P."/>
            <person name="Lucas S."/>
            <person name="Rokhsar D."/>
            <person name="Wang M."/>
            <person name="Lindquist E.A."/>
        </authorList>
    </citation>
    <scope>NUCLEOTIDE SEQUENCE [MRNA]</scope>
</reference>
<reference key="2">
    <citation type="journal article" date="2015" name="Mol. Biol. Evol.">
        <title>Evolution of an ancient venom: recognition of a novel family of cnidarian toxins and the common evolutionary origin of sodium and potassium neurotoxins in sea anemone.</title>
        <authorList>
            <person name="Jouiaei M."/>
            <person name="Sunagar K."/>
            <person name="Federman Gross A."/>
            <person name="Scheib H."/>
            <person name="Alewood P.F."/>
            <person name="Moran Y."/>
            <person name="Fry B.G."/>
        </authorList>
    </citation>
    <scope>NOMENCLATURE</scope>
</reference>
<reference key="3">
    <citation type="journal article" date="2024" name="Toxins">
        <title>Evolutionary analysis of cnidaria small cysteine-rich proteins (scrips), an enigmatic neurotoxin family from stony corals and sea anemones (Anthozoa: Hexacorallia).</title>
        <authorList>
            <person name="Barroso R.A."/>
            <person name="Ramos L."/>
            <person name="Moreno H."/>
            <person name="Antunes A."/>
        </authorList>
    </citation>
    <scope>NOMENCLATURE</scope>
</reference>
<protein>
    <recommendedName>
        <fullName evidence="4">Small cysteine-rich protein</fullName>
        <shortName evidence="5">Msen-SCRiP</shortName>
        <shortName evidence="4">SCRiP</shortName>
    </recommendedName>
</protein>
<name>SCRD_METSE</name>
<evidence type="ECO:0000250" key="1">
    <source>
        <dbReference type="UniProtKB" id="C0H691"/>
    </source>
</evidence>
<evidence type="ECO:0000250" key="2">
    <source>
        <dbReference type="UniProtKB" id="C0H692"/>
    </source>
</evidence>
<evidence type="ECO:0000255" key="3"/>
<evidence type="ECO:0000303" key="4">
    <source>
    </source>
</evidence>
<evidence type="ECO:0000305" key="5"/>
<evidence type="ECO:0000305" key="6">
    <source>
    </source>
</evidence>
<evidence type="ECO:0000305" key="7">
    <source>
    </source>
</evidence>
<organism>
    <name type="scientific">Metridium senile</name>
    <name type="common">Brown sea anemone</name>
    <name type="synonym">Frilled sea anemone</name>
    <dbReference type="NCBI Taxonomy" id="6116"/>
    <lineage>
        <taxon>Eukaryota</taxon>
        <taxon>Metazoa</taxon>
        <taxon>Cnidaria</taxon>
        <taxon>Anthozoa</taxon>
        <taxon>Hexacorallia</taxon>
        <taxon>Actiniaria</taxon>
        <taxon>Nynantheae</taxon>
        <taxon>Metridiidae</taxon>
        <taxon>Metridium</taxon>
    </lineage>
</organism>
<accession>P0DL60</accession>
<comment type="function">
    <text evidence="1 2">Induces neurotoxic symptoms on zebrafish (By similarity). Has also been claimed to be implied in calcification, but this function seems improbable (By similarity).</text>
</comment>
<comment type="subcellular location">
    <subcellularLocation>
        <location>Secreted</location>
    </subcellularLocation>
    <subcellularLocation>
        <location evidence="5">Nematocyst</location>
    </subcellularLocation>
</comment>
<comment type="PTM">
    <text evidence="5">Contains 4 disulfide bonds.</text>
</comment>
<comment type="miscellaneous">
    <text evidence="6">This protein indicates that the SCRiP family is also present in Actiniaria (sea anemones) and not only in Scleractinia (stony corals). This family has firstly been claimed to be implied in calcification, however, as this family is also present in sea anemones and that they are not calcified, this function seems improbable.</text>
</comment>
<comment type="similarity">
    <text evidence="7">Belongs to the Cnidaria small cysteine-rich protein (SCRiP) family. delta subfamily.</text>
</comment>
<keyword id="KW-1015">Disulfide bond</keyword>
<keyword id="KW-0166">Nematocyst</keyword>
<keyword id="KW-0528">Neurotoxin</keyword>
<keyword id="KW-0964">Secreted</keyword>
<keyword id="KW-0732">Signal</keyword>
<keyword id="KW-0800">Toxin</keyword>
<sequence length="69" mass="7944">MKLQLCLVLLLLGVLYVQSVPEKRNKPECNSYRGQCTYMGHPCPDHTFPCETYFDCPAGPHERCCCYKD</sequence>